<protein>
    <recommendedName>
        <fullName evidence="1">Pyridoxal 5'-phosphate synthase subunit PdxS</fullName>
        <shortName evidence="1">PLP synthase subunit PdxS</shortName>
        <ecNumber evidence="1">4.3.3.6</ecNumber>
    </recommendedName>
    <alternativeName>
        <fullName evidence="1">Pdx1</fullName>
    </alternativeName>
</protein>
<proteinExistence type="inferred from homology"/>
<organism>
    <name type="scientific">Bacillus licheniformis (strain ATCC 14580 / DSM 13 / JCM 2505 / CCUG 7422 / NBRC 12200 / NCIMB 9375 / NCTC 10341 / NRRL NRS-1264 / Gibson 46)</name>
    <dbReference type="NCBI Taxonomy" id="279010"/>
    <lineage>
        <taxon>Bacteria</taxon>
        <taxon>Bacillati</taxon>
        <taxon>Bacillota</taxon>
        <taxon>Bacilli</taxon>
        <taxon>Bacillales</taxon>
        <taxon>Bacillaceae</taxon>
        <taxon>Bacillus</taxon>
    </lineage>
</organism>
<gene>
    <name evidence="1" type="primary">pdxS</name>
    <name type="ordered locus">BLi00016</name>
    <name type="ordered locus">BL02353</name>
</gene>
<accession>Q65PL2</accession>
<accession>Q630A3</accession>
<keyword id="KW-0456">Lyase</keyword>
<keyword id="KW-0663">Pyridoxal phosphate</keyword>
<keyword id="KW-1185">Reference proteome</keyword>
<keyword id="KW-0704">Schiff base</keyword>
<reference key="1">
    <citation type="journal article" date="2004" name="J. Mol. Microbiol. Biotechnol.">
        <title>The complete genome sequence of Bacillus licheniformis DSM13, an organism with great industrial potential.</title>
        <authorList>
            <person name="Veith B."/>
            <person name="Herzberg C."/>
            <person name="Steckel S."/>
            <person name="Feesche J."/>
            <person name="Maurer K.H."/>
            <person name="Ehrenreich P."/>
            <person name="Baeumer S."/>
            <person name="Henne A."/>
            <person name="Liesegang H."/>
            <person name="Merkl R."/>
            <person name="Ehrenreich A."/>
            <person name="Gottschalk G."/>
        </authorList>
    </citation>
    <scope>NUCLEOTIDE SEQUENCE [LARGE SCALE GENOMIC DNA]</scope>
    <source>
        <strain>ATCC 14580 / DSM 13 / JCM 2505 / CCUG 7422 / NBRC 12200 / NCIMB 9375 / NCTC 10341 / NRRL NRS-1264 / Gibson 46</strain>
    </source>
</reference>
<reference key="2">
    <citation type="journal article" date="2004" name="Genome Biol.">
        <title>Complete genome sequence of the industrial bacterium Bacillus licheniformis and comparisons with closely related Bacillus species.</title>
        <authorList>
            <person name="Rey M.W."/>
            <person name="Ramaiya P."/>
            <person name="Nelson B.A."/>
            <person name="Brody-Karpin S.D."/>
            <person name="Zaretsky E.J."/>
            <person name="Tang M."/>
            <person name="Lopez de Leon A."/>
            <person name="Xiang H."/>
            <person name="Gusti V."/>
            <person name="Clausen I.G."/>
            <person name="Olsen P.B."/>
            <person name="Rasmussen M.D."/>
            <person name="Andersen J.T."/>
            <person name="Joergensen P.L."/>
            <person name="Larsen T.S."/>
            <person name="Sorokin A."/>
            <person name="Bolotin A."/>
            <person name="Lapidus A."/>
            <person name="Galleron N."/>
            <person name="Ehrlich S.D."/>
            <person name="Berka R.M."/>
        </authorList>
    </citation>
    <scope>NUCLEOTIDE SEQUENCE [LARGE SCALE GENOMIC DNA]</scope>
    <source>
        <strain>ATCC 14580 / DSM 13 / JCM 2505 / CCUG 7422 / NBRC 12200 / NCIMB 9375 / NCTC 10341 / NRRL NRS-1264 / Gibson 46</strain>
    </source>
</reference>
<comment type="function">
    <text evidence="1">Catalyzes the formation of pyridoxal 5'-phosphate from ribose 5-phosphate (RBP), glyceraldehyde 3-phosphate (G3P) and ammonia. The ammonia is provided by the PdxT subunit. Can also use ribulose 5-phosphate and dihydroxyacetone phosphate as substrates, resulting from enzyme-catalyzed isomerization of RBP and G3P, respectively.</text>
</comment>
<comment type="catalytic activity">
    <reaction evidence="1">
        <text>aldehydo-D-ribose 5-phosphate + D-glyceraldehyde 3-phosphate + L-glutamine = pyridoxal 5'-phosphate + L-glutamate + phosphate + 3 H2O + H(+)</text>
        <dbReference type="Rhea" id="RHEA:31507"/>
        <dbReference type="ChEBI" id="CHEBI:15377"/>
        <dbReference type="ChEBI" id="CHEBI:15378"/>
        <dbReference type="ChEBI" id="CHEBI:29985"/>
        <dbReference type="ChEBI" id="CHEBI:43474"/>
        <dbReference type="ChEBI" id="CHEBI:58273"/>
        <dbReference type="ChEBI" id="CHEBI:58359"/>
        <dbReference type="ChEBI" id="CHEBI:59776"/>
        <dbReference type="ChEBI" id="CHEBI:597326"/>
        <dbReference type="EC" id="4.3.3.6"/>
    </reaction>
</comment>
<comment type="pathway">
    <text evidence="1">Cofactor biosynthesis; pyridoxal 5'-phosphate biosynthesis.</text>
</comment>
<comment type="subunit">
    <text evidence="1">In the presence of PdxT, forms a dodecamer of heterodimers.</text>
</comment>
<comment type="similarity">
    <text evidence="1">Belongs to the PdxS/SNZ family.</text>
</comment>
<sequence length="294" mass="31522">MAQTGTDRVKRGMAEMQKGGVIMDVVNAEQAKIAEEAGAVAVMALERVPADIRAAGGVARMADPTIVEEVMNAVSIPVMAKARIGHIVEARVLEALGVDYIDESEVLTPADEEFHLNKNEFTVPFVCGCRDLGEATRRIAEGASMLRTKGEPGTGNIVEAVRHMRKVNAQVRKVVGMSDDELMTEAKNLGAPYELLKEIKAEGRLPVVNFAAGGVATPADAALMMQLGADGVFVGSGIFKSDNPAKFAKAIVEATTHFTDYKLIAELSKELGTAMKGIEISNLLPEQRMQERGW</sequence>
<feature type="chain" id="PRO_0000109381" description="Pyridoxal 5'-phosphate synthase subunit PdxS">
    <location>
        <begin position="1"/>
        <end position="294"/>
    </location>
</feature>
<feature type="active site" description="Schiff-base intermediate with D-ribose 5-phosphate" evidence="1">
    <location>
        <position position="81"/>
    </location>
</feature>
<feature type="binding site" evidence="1">
    <location>
        <position position="24"/>
    </location>
    <ligand>
        <name>D-ribose 5-phosphate</name>
        <dbReference type="ChEBI" id="CHEBI:78346"/>
    </ligand>
</feature>
<feature type="binding site" evidence="1">
    <location>
        <position position="153"/>
    </location>
    <ligand>
        <name>D-ribose 5-phosphate</name>
        <dbReference type="ChEBI" id="CHEBI:78346"/>
    </ligand>
</feature>
<feature type="binding site" evidence="1">
    <location>
        <position position="165"/>
    </location>
    <ligand>
        <name>D-glyceraldehyde 3-phosphate</name>
        <dbReference type="ChEBI" id="CHEBI:59776"/>
    </ligand>
</feature>
<feature type="binding site" evidence="1">
    <location>
        <position position="214"/>
    </location>
    <ligand>
        <name>D-ribose 5-phosphate</name>
        <dbReference type="ChEBI" id="CHEBI:78346"/>
    </ligand>
</feature>
<feature type="binding site" evidence="1">
    <location>
        <begin position="235"/>
        <end position="236"/>
    </location>
    <ligand>
        <name>D-ribose 5-phosphate</name>
        <dbReference type="ChEBI" id="CHEBI:78346"/>
    </ligand>
</feature>
<evidence type="ECO:0000255" key="1">
    <source>
        <dbReference type="HAMAP-Rule" id="MF_01824"/>
    </source>
</evidence>
<dbReference type="EC" id="4.3.3.6" evidence="1"/>
<dbReference type="EMBL" id="AE017333">
    <property type="protein sequence ID" value="AAU39002.1"/>
    <property type="molecule type" value="Genomic_DNA"/>
</dbReference>
<dbReference type="EMBL" id="CP000002">
    <property type="protein sequence ID" value="AAU21655.1"/>
    <property type="molecule type" value="Genomic_DNA"/>
</dbReference>
<dbReference type="RefSeq" id="WP_003178108.1">
    <property type="nucleotide sequence ID" value="NC_006322.1"/>
</dbReference>
<dbReference type="SMR" id="Q65PL2"/>
<dbReference type="STRING" id="279010.BL02353"/>
<dbReference type="GeneID" id="92859035"/>
<dbReference type="KEGG" id="bld:BLi00016"/>
<dbReference type="KEGG" id="bli:BL02353"/>
<dbReference type="eggNOG" id="COG0214">
    <property type="taxonomic scope" value="Bacteria"/>
</dbReference>
<dbReference type="HOGENOM" id="CLU_055352_1_0_9"/>
<dbReference type="UniPathway" id="UPA00245"/>
<dbReference type="Proteomes" id="UP000000606">
    <property type="component" value="Chromosome"/>
</dbReference>
<dbReference type="GO" id="GO:0036381">
    <property type="term" value="F:pyridoxal 5'-phosphate synthase (glutamine hydrolysing) activity"/>
    <property type="evidence" value="ECO:0007669"/>
    <property type="project" value="UniProtKB-UniRule"/>
</dbReference>
<dbReference type="GO" id="GO:0006520">
    <property type="term" value="P:amino acid metabolic process"/>
    <property type="evidence" value="ECO:0007669"/>
    <property type="project" value="TreeGrafter"/>
</dbReference>
<dbReference type="GO" id="GO:0042823">
    <property type="term" value="P:pyridoxal phosphate biosynthetic process"/>
    <property type="evidence" value="ECO:0007669"/>
    <property type="project" value="UniProtKB-UniRule"/>
</dbReference>
<dbReference type="GO" id="GO:0008615">
    <property type="term" value="P:pyridoxine biosynthetic process"/>
    <property type="evidence" value="ECO:0007669"/>
    <property type="project" value="TreeGrafter"/>
</dbReference>
<dbReference type="CDD" id="cd04727">
    <property type="entry name" value="pdxS"/>
    <property type="match status" value="1"/>
</dbReference>
<dbReference type="FunFam" id="3.20.20.70:FF:000001">
    <property type="entry name" value="Pyridoxine biosynthesis protein PDX1"/>
    <property type="match status" value="1"/>
</dbReference>
<dbReference type="Gene3D" id="3.20.20.70">
    <property type="entry name" value="Aldolase class I"/>
    <property type="match status" value="1"/>
</dbReference>
<dbReference type="HAMAP" id="MF_01824">
    <property type="entry name" value="PdxS"/>
    <property type="match status" value="1"/>
</dbReference>
<dbReference type="InterPro" id="IPR013785">
    <property type="entry name" value="Aldolase_TIM"/>
</dbReference>
<dbReference type="InterPro" id="IPR001852">
    <property type="entry name" value="PdxS/SNZ"/>
</dbReference>
<dbReference type="InterPro" id="IPR033755">
    <property type="entry name" value="PdxS/SNZ_N"/>
</dbReference>
<dbReference type="InterPro" id="IPR011060">
    <property type="entry name" value="RibuloseP-bd_barrel"/>
</dbReference>
<dbReference type="NCBIfam" id="NF003215">
    <property type="entry name" value="PRK04180.1"/>
    <property type="match status" value="1"/>
</dbReference>
<dbReference type="NCBIfam" id="TIGR00343">
    <property type="entry name" value="pyridoxal 5'-phosphate synthase lyase subunit PdxS"/>
    <property type="match status" value="1"/>
</dbReference>
<dbReference type="PANTHER" id="PTHR31829">
    <property type="entry name" value="PYRIDOXAL 5'-PHOSPHATE SYNTHASE SUBUNIT SNZ1-RELATED"/>
    <property type="match status" value="1"/>
</dbReference>
<dbReference type="PANTHER" id="PTHR31829:SF0">
    <property type="entry name" value="PYRIDOXAL 5'-PHOSPHATE SYNTHASE SUBUNIT SNZ1-RELATED"/>
    <property type="match status" value="1"/>
</dbReference>
<dbReference type="Pfam" id="PF01680">
    <property type="entry name" value="SOR_SNZ"/>
    <property type="match status" value="1"/>
</dbReference>
<dbReference type="PIRSF" id="PIRSF029271">
    <property type="entry name" value="Pdx1"/>
    <property type="match status" value="1"/>
</dbReference>
<dbReference type="SUPFAM" id="SSF51366">
    <property type="entry name" value="Ribulose-phoshate binding barrel"/>
    <property type="match status" value="1"/>
</dbReference>
<dbReference type="PROSITE" id="PS01235">
    <property type="entry name" value="PDXS_SNZ_1"/>
    <property type="match status" value="1"/>
</dbReference>
<dbReference type="PROSITE" id="PS51129">
    <property type="entry name" value="PDXS_SNZ_2"/>
    <property type="match status" value="1"/>
</dbReference>
<name>PDXS_BACLD</name>